<reference key="1">
    <citation type="journal article" date="1981" name="Sci. Sin.">
        <title>The primary structure of snake (Zaocys dhumnades dhumnades, Cantor) insulin.</title>
        <authorList>
            <person name="Zhang Y.S."/>
            <person name="Cao Q.-P."/>
            <person name="Zhang Y.S."/>
        </authorList>
    </citation>
    <scope>PROTEIN SEQUENCE</scope>
</reference>
<protein>
    <recommendedName>
        <fullName>Insulin</fullName>
    </recommendedName>
    <component>
        <recommendedName>
            <fullName>Insulin B chain</fullName>
        </recommendedName>
    </component>
    <component>
        <recommendedName>
            <fullName>Insulin A chain</fullName>
        </recommendedName>
    </component>
</protein>
<accession>P12708</accession>
<sequence length="51" mass="5809">APNQRLCGSHLVEALFLICGERGFYYSPRTGIVEQCCENTCSLYELENYCN</sequence>
<name>INS_PTYDH</name>
<proteinExistence type="evidence at protein level"/>
<dbReference type="PIR" id="JQ0359">
    <property type="entry name" value="JQ0359"/>
</dbReference>
<dbReference type="SMR" id="P12708"/>
<dbReference type="GO" id="GO:0005615">
    <property type="term" value="C:extracellular space"/>
    <property type="evidence" value="ECO:0007669"/>
    <property type="project" value="TreeGrafter"/>
</dbReference>
<dbReference type="GO" id="GO:0005179">
    <property type="term" value="F:hormone activity"/>
    <property type="evidence" value="ECO:0007669"/>
    <property type="project" value="UniProtKB-KW"/>
</dbReference>
<dbReference type="GO" id="GO:0006006">
    <property type="term" value="P:glucose metabolic process"/>
    <property type="evidence" value="ECO:0007669"/>
    <property type="project" value="UniProtKB-KW"/>
</dbReference>
<dbReference type="CDD" id="cd04367">
    <property type="entry name" value="IlGF_insulin_like"/>
    <property type="match status" value="1"/>
</dbReference>
<dbReference type="Gene3D" id="1.10.100.10">
    <property type="entry name" value="Insulin-like"/>
    <property type="match status" value="1"/>
</dbReference>
<dbReference type="InterPro" id="IPR004825">
    <property type="entry name" value="Insulin"/>
</dbReference>
<dbReference type="InterPro" id="IPR016179">
    <property type="entry name" value="Insulin-like"/>
</dbReference>
<dbReference type="InterPro" id="IPR036438">
    <property type="entry name" value="Insulin-like_sf"/>
</dbReference>
<dbReference type="InterPro" id="IPR022353">
    <property type="entry name" value="Insulin_CS"/>
</dbReference>
<dbReference type="InterPro" id="IPR022352">
    <property type="entry name" value="Insulin_family"/>
</dbReference>
<dbReference type="PANTHER" id="PTHR11454:SF9">
    <property type="entry name" value="INSULIN"/>
    <property type="match status" value="1"/>
</dbReference>
<dbReference type="PANTHER" id="PTHR11454">
    <property type="entry name" value="INSULIN/INSULIN GROWTH FACTOR"/>
    <property type="match status" value="1"/>
</dbReference>
<dbReference type="Pfam" id="PF00049">
    <property type="entry name" value="Insulin"/>
    <property type="match status" value="2"/>
</dbReference>
<dbReference type="PRINTS" id="PR00277">
    <property type="entry name" value="INSULIN"/>
</dbReference>
<dbReference type="PRINTS" id="PR00276">
    <property type="entry name" value="INSULINFAMLY"/>
</dbReference>
<dbReference type="SMART" id="SM00078">
    <property type="entry name" value="IlGF"/>
    <property type="match status" value="1"/>
</dbReference>
<dbReference type="SUPFAM" id="SSF56994">
    <property type="entry name" value="Insulin-like"/>
    <property type="match status" value="1"/>
</dbReference>
<dbReference type="PROSITE" id="PS00262">
    <property type="entry name" value="INSULIN"/>
    <property type="match status" value="1"/>
</dbReference>
<feature type="peptide" id="PRO_0000015935" description="Insulin B chain">
    <location>
        <begin position="1"/>
        <end position="30"/>
    </location>
</feature>
<feature type="peptide" id="PRO_0000015936" description="Insulin A chain">
    <location>
        <begin position="31"/>
        <end position="51"/>
    </location>
</feature>
<feature type="disulfide bond" description="Interchain (between B and A chains)">
    <location>
        <begin position="7"/>
        <end position="37"/>
    </location>
</feature>
<feature type="disulfide bond" description="Interchain (between B and A chains)">
    <location>
        <begin position="19"/>
        <end position="50"/>
    </location>
</feature>
<feature type="disulfide bond">
    <location>
        <begin position="36"/>
        <end position="41"/>
    </location>
</feature>
<feature type="non-consecutive residues" evidence="1">
    <location>
        <begin position="30"/>
        <end position="31"/>
    </location>
</feature>
<comment type="function">
    <text>Insulin decreases blood glucose concentration. It increases cell permeability to monosaccharides, amino acids and fatty acids. It accelerates glycolysis, the pentose phosphate cycle, and glycogen synthesis in liver.</text>
</comment>
<comment type="subunit">
    <text>Heterodimer of a B chain and an A chain linked by two disulfide bonds.</text>
</comment>
<comment type="subcellular location">
    <subcellularLocation>
        <location>Secreted</location>
    </subcellularLocation>
</comment>
<comment type="similarity">
    <text evidence="1">Belongs to the insulin family.</text>
</comment>
<evidence type="ECO:0000305" key="1"/>
<gene>
    <name type="primary">INS</name>
</gene>
<keyword id="KW-0119">Carbohydrate metabolism</keyword>
<keyword id="KW-0903">Direct protein sequencing</keyword>
<keyword id="KW-1015">Disulfide bond</keyword>
<keyword id="KW-0313">Glucose metabolism</keyword>
<keyword id="KW-0372">Hormone</keyword>
<keyword id="KW-0964">Secreted</keyword>
<organism>
    <name type="scientific">Ptyas dhumnades</name>
    <name type="common">Big-eyed ratsnake</name>
    <name type="synonym">Zaocys dhumnades</name>
    <dbReference type="NCBI Taxonomy" id="8587"/>
    <lineage>
        <taxon>Eukaryota</taxon>
        <taxon>Metazoa</taxon>
        <taxon>Chordata</taxon>
        <taxon>Craniata</taxon>
        <taxon>Vertebrata</taxon>
        <taxon>Euteleostomi</taxon>
        <taxon>Lepidosauria</taxon>
        <taxon>Squamata</taxon>
        <taxon>Bifurcata</taxon>
        <taxon>Unidentata</taxon>
        <taxon>Episquamata</taxon>
        <taxon>Toxicofera</taxon>
        <taxon>Serpentes</taxon>
        <taxon>Colubroidea</taxon>
        <taxon>Colubridae</taxon>
        <taxon>Colubrinae</taxon>
        <taxon>Ptyas</taxon>
    </lineage>
</organism>